<proteinExistence type="inferred from homology"/>
<accession>B1JS47</accession>
<evidence type="ECO:0000255" key="1">
    <source>
        <dbReference type="HAMAP-Rule" id="MF_00816"/>
    </source>
</evidence>
<organism>
    <name type="scientific">Yersinia pseudotuberculosis serotype O:3 (strain YPIII)</name>
    <dbReference type="NCBI Taxonomy" id="502800"/>
    <lineage>
        <taxon>Bacteria</taxon>
        <taxon>Pseudomonadati</taxon>
        <taxon>Pseudomonadota</taxon>
        <taxon>Gammaproteobacteria</taxon>
        <taxon>Enterobacterales</taxon>
        <taxon>Yersiniaceae</taxon>
        <taxon>Yersinia</taxon>
    </lineage>
</organism>
<gene>
    <name type="ordered locus">YPK_2797</name>
</gene>
<dbReference type="EMBL" id="CP000950">
    <property type="protein sequence ID" value="ACA69074.1"/>
    <property type="molecule type" value="Genomic_DNA"/>
</dbReference>
<dbReference type="RefSeq" id="WP_002208836.1">
    <property type="nucleotide sequence ID" value="NZ_CP009792.1"/>
</dbReference>
<dbReference type="SMR" id="B1JS47"/>
<dbReference type="KEGG" id="ypy:YPK_2797"/>
<dbReference type="PATRIC" id="fig|502800.11.peg.3508"/>
<dbReference type="Gene3D" id="1.10.3390.10">
    <property type="entry name" value="YejL-like"/>
    <property type="match status" value="1"/>
</dbReference>
<dbReference type="HAMAP" id="MF_00816">
    <property type="entry name" value="UPF0352"/>
    <property type="match status" value="1"/>
</dbReference>
<dbReference type="InterPro" id="IPR009857">
    <property type="entry name" value="UPF0352"/>
</dbReference>
<dbReference type="InterPro" id="IPR023202">
    <property type="entry name" value="YejL_sf"/>
</dbReference>
<dbReference type="NCBIfam" id="NF010242">
    <property type="entry name" value="PRK13689.1"/>
    <property type="match status" value="1"/>
</dbReference>
<dbReference type="Pfam" id="PF07208">
    <property type="entry name" value="DUF1414"/>
    <property type="match status" value="1"/>
</dbReference>
<dbReference type="PIRSF" id="PIRSF006188">
    <property type="entry name" value="UCP006188"/>
    <property type="match status" value="1"/>
</dbReference>
<dbReference type="SUPFAM" id="SSF158651">
    <property type="entry name" value="YejL-like"/>
    <property type="match status" value="1"/>
</dbReference>
<sequence length="75" mass="8360">MPQSSRYSDEHVEQLLSELVSVLEKHRTPTDLSLMVLGNMVTNLINTSIAPAQRKVLARSFAEALQASVREDKAH</sequence>
<protein>
    <recommendedName>
        <fullName evidence="1">UPF0352 protein YPK_2797</fullName>
    </recommendedName>
</protein>
<feature type="chain" id="PRO_1000199607" description="UPF0352 protein YPK_2797">
    <location>
        <begin position="1"/>
        <end position="75"/>
    </location>
</feature>
<name>Y2797_YERPY</name>
<comment type="similarity">
    <text evidence="1">Belongs to the UPF0352 family.</text>
</comment>
<reference key="1">
    <citation type="submission" date="2008-02" db="EMBL/GenBank/DDBJ databases">
        <title>Complete sequence of Yersinia pseudotuberculosis YPIII.</title>
        <authorList>
            <consortium name="US DOE Joint Genome Institute"/>
            <person name="Copeland A."/>
            <person name="Lucas S."/>
            <person name="Lapidus A."/>
            <person name="Glavina del Rio T."/>
            <person name="Dalin E."/>
            <person name="Tice H."/>
            <person name="Bruce D."/>
            <person name="Goodwin L."/>
            <person name="Pitluck S."/>
            <person name="Munk A.C."/>
            <person name="Brettin T."/>
            <person name="Detter J.C."/>
            <person name="Han C."/>
            <person name="Tapia R."/>
            <person name="Schmutz J."/>
            <person name="Larimer F."/>
            <person name="Land M."/>
            <person name="Hauser L."/>
            <person name="Challacombe J.F."/>
            <person name="Green L."/>
            <person name="Lindler L.E."/>
            <person name="Nikolich M.P."/>
            <person name="Richardson P."/>
        </authorList>
    </citation>
    <scope>NUCLEOTIDE SEQUENCE [LARGE SCALE GENOMIC DNA]</scope>
    <source>
        <strain>YPIII</strain>
    </source>
</reference>